<accession>Q3SW27</accession>
<gene>
    <name evidence="1" type="primary">murA</name>
    <name type="ordered locus">Nwi_0246</name>
</gene>
<proteinExistence type="inferred from homology"/>
<evidence type="ECO:0000255" key="1">
    <source>
        <dbReference type="HAMAP-Rule" id="MF_00111"/>
    </source>
</evidence>
<reference key="1">
    <citation type="journal article" date="2006" name="Appl. Environ. Microbiol.">
        <title>Genome sequence of the chemolithoautotrophic nitrite-oxidizing bacterium Nitrobacter winogradskyi Nb-255.</title>
        <authorList>
            <person name="Starkenburg S.R."/>
            <person name="Chain P.S.G."/>
            <person name="Sayavedra-Soto L.A."/>
            <person name="Hauser L."/>
            <person name="Land M.L."/>
            <person name="Larimer F.W."/>
            <person name="Malfatti S.A."/>
            <person name="Klotz M.G."/>
            <person name="Bottomley P.J."/>
            <person name="Arp D.J."/>
            <person name="Hickey W.J."/>
        </authorList>
    </citation>
    <scope>NUCLEOTIDE SEQUENCE [LARGE SCALE GENOMIC DNA]</scope>
    <source>
        <strain>ATCC 25391 / DSM 10237 / CIP 104748 / NCIMB 11846 / Nb-255</strain>
    </source>
</reference>
<organism>
    <name type="scientific">Nitrobacter winogradskyi (strain ATCC 25391 / DSM 10237 / CIP 104748 / NCIMB 11846 / Nb-255)</name>
    <dbReference type="NCBI Taxonomy" id="323098"/>
    <lineage>
        <taxon>Bacteria</taxon>
        <taxon>Pseudomonadati</taxon>
        <taxon>Pseudomonadota</taxon>
        <taxon>Alphaproteobacteria</taxon>
        <taxon>Hyphomicrobiales</taxon>
        <taxon>Nitrobacteraceae</taxon>
        <taxon>Nitrobacter</taxon>
    </lineage>
</organism>
<protein>
    <recommendedName>
        <fullName evidence="1">UDP-N-acetylglucosamine 1-carboxyvinyltransferase</fullName>
        <ecNumber evidence="1">2.5.1.7</ecNumber>
    </recommendedName>
    <alternativeName>
        <fullName evidence="1">Enoylpyruvate transferase</fullName>
    </alternativeName>
    <alternativeName>
        <fullName evidence="1">UDP-N-acetylglucosamine enolpyruvyl transferase</fullName>
        <shortName evidence="1">EPT</shortName>
    </alternativeName>
</protein>
<dbReference type="EC" id="2.5.1.7" evidence="1"/>
<dbReference type="EMBL" id="CP000115">
    <property type="protein sequence ID" value="ABA03514.1"/>
    <property type="molecule type" value="Genomic_DNA"/>
</dbReference>
<dbReference type="RefSeq" id="WP_011313580.1">
    <property type="nucleotide sequence ID" value="NC_007406.1"/>
</dbReference>
<dbReference type="SMR" id="Q3SW27"/>
<dbReference type="STRING" id="323098.Nwi_0246"/>
<dbReference type="KEGG" id="nwi:Nwi_0246"/>
<dbReference type="eggNOG" id="COG0766">
    <property type="taxonomic scope" value="Bacteria"/>
</dbReference>
<dbReference type="HOGENOM" id="CLU_027387_0_0_5"/>
<dbReference type="OrthoDB" id="9803760at2"/>
<dbReference type="UniPathway" id="UPA00219"/>
<dbReference type="Proteomes" id="UP000002531">
    <property type="component" value="Chromosome"/>
</dbReference>
<dbReference type="GO" id="GO:0005737">
    <property type="term" value="C:cytoplasm"/>
    <property type="evidence" value="ECO:0007669"/>
    <property type="project" value="UniProtKB-SubCell"/>
</dbReference>
<dbReference type="GO" id="GO:0008760">
    <property type="term" value="F:UDP-N-acetylglucosamine 1-carboxyvinyltransferase activity"/>
    <property type="evidence" value="ECO:0007669"/>
    <property type="project" value="UniProtKB-UniRule"/>
</dbReference>
<dbReference type="GO" id="GO:0051301">
    <property type="term" value="P:cell division"/>
    <property type="evidence" value="ECO:0007669"/>
    <property type="project" value="UniProtKB-KW"/>
</dbReference>
<dbReference type="GO" id="GO:0071555">
    <property type="term" value="P:cell wall organization"/>
    <property type="evidence" value="ECO:0007669"/>
    <property type="project" value="UniProtKB-KW"/>
</dbReference>
<dbReference type="GO" id="GO:0009252">
    <property type="term" value="P:peptidoglycan biosynthetic process"/>
    <property type="evidence" value="ECO:0007669"/>
    <property type="project" value="UniProtKB-UniRule"/>
</dbReference>
<dbReference type="GO" id="GO:0008360">
    <property type="term" value="P:regulation of cell shape"/>
    <property type="evidence" value="ECO:0007669"/>
    <property type="project" value="UniProtKB-KW"/>
</dbReference>
<dbReference type="GO" id="GO:0019277">
    <property type="term" value="P:UDP-N-acetylgalactosamine biosynthetic process"/>
    <property type="evidence" value="ECO:0007669"/>
    <property type="project" value="InterPro"/>
</dbReference>
<dbReference type="CDD" id="cd01555">
    <property type="entry name" value="UdpNAET"/>
    <property type="match status" value="1"/>
</dbReference>
<dbReference type="FunFam" id="3.65.10.10:FF:000001">
    <property type="entry name" value="UDP-N-acetylglucosamine 1-carboxyvinyltransferase"/>
    <property type="match status" value="1"/>
</dbReference>
<dbReference type="Gene3D" id="3.65.10.10">
    <property type="entry name" value="Enolpyruvate transferase domain"/>
    <property type="match status" value="2"/>
</dbReference>
<dbReference type="HAMAP" id="MF_00111">
    <property type="entry name" value="MurA"/>
    <property type="match status" value="1"/>
</dbReference>
<dbReference type="InterPro" id="IPR001986">
    <property type="entry name" value="Enolpyruvate_Tfrase_dom"/>
</dbReference>
<dbReference type="InterPro" id="IPR036968">
    <property type="entry name" value="Enolpyruvate_Tfrase_sf"/>
</dbReference>
<dbReference type="InterPro" id="IPR050068">
    <property type="entry name" value="MurA_subfamily"/>
</dbReference>
<dbReference type="InterPro" id="IPR013792">
    <property type="entry name" value="RNA3'P_cycl/enolpyr_Trfase_a/b"/>
</dbReference>
<dbReference type="InterPro" id="IPR005750">
    <property type="entry name" value="UDP_GlcNAc_COvinyl_MurA"/>
</dbReference>
<dbReference type="NCBIfam" id="TIGR01072">
    <property type="entry name" value="murA"/>
    <property type="match status" value="1"/>
</dbReference>
<dbReference type="NCBIfam" id="NF006873">
    <property type="entry name" value="PRK09369.1"/>
    <property type="match status" value="1"/>
</dbReference>
<dbReference type="PANTHER" id="PTHR43783">
    <property type="entry name" value="UDP-N-ACETYLGLUCOSAMINE 1-CARBOXYVINYLTRANSFERASE"/>
    <property type="match status" value="1"/>
</dbReference>
<dbReference type="PANTHER" id="PTHR43783:SF1">
    <property type="entry name" value="UDP-N-ACETYLGLUCOSAMINE 1-CARBOXYVINYLTRANSFERASE"/>
    <property type="match status" value="1"/>
</dbReference>
<dbReference type="Pfam" id="PF00275">
    <property type="entry name" value="EPSP_synthase"/>
    <property type="match status" value="1"/>
</dbReference>
<dbReference type="SUPFAM" id="SSF55205">
    <property type="entry name" value="EPT/RTPC-like"/>
    <property type="match status" value="1"/>
</dbReference>
<name>MURA_NITWN</name>
<feature type="chain" id="PRO_0000231226" description="UDP-N-acetylglucosamine 1-carboxyvinyltransferase">
    <location>
        <begin position="1"/>
        <end position="429"/>
    </location>
</feature>
<feature type="active site" description="Proton donor" evidence="1">
    <location>
        <position position="126"/>
    </location>
</feature>
<feature type="binding site" evidence="1">
    <location>
        <begin position="22"/>
        <end position="23"/>
    </location>
    <ligand>
        <name>phosphoenolpyruvate</name>
        <dbReference type="ChEBI" id="CHEBI:58702"/>
    </ligand>
</feature>
<feature type="binding site" evidence="1">
    <location>
        <position position="102"/>
    </location>
    <ligand>
        <name>UDP-N-acetyl-alpha-D-glucosamine</name>
        <dbReference type="ChEBI" id="CHEBI:57705"/>
    </ligand>
</feature>
<feature type="binding site" evidence="1">
    <location>
        <begin position="131"/>
        <end position="135"/>
    </location>
    <ligand>
        <name>UDP-N-acetyl-alpha-D-glucosamine</name>
        <dbReference type="ChEBI" id="CHEBI:57705"/>
    </ligand>
</feature>
<feature type="binding site" evidence="1">
    <location>
        <position position="316"/>
    </location>
    <ligand>
        <name>UDP-N-acetyl-alpha-D-glucosamine</name>
        <dbReference type="ChEBI" id="CHEBI:57705"/>
    </ligand>
</feature>
<feature type="binding site" evidence="1">
    <location>
        <position position="338"/>
    </location>
    <ligand>
        <name>UDP-N-acetyl-alpha-D-glucosamine</name>
        <dbReference type="ChEBI" id="CHEBI:57705"/>
    </ligand>
</feature>
<feature type="modified residue" description="2-(S-cysteinyl)pyruvic acid O-phosphothioketal" evidence="1">
    <location>
        <position position="126"/>
    </location>
</feature>
<comment type="function">
    <text evidence="1">Cell wall formation. Adds enolpyruvyl to UDP-N-acetylglucosamine.</text>
</comment>
<comment type="catalytic activity">
    <reaction evidence="1">
        <text>phosphoenolpyruvate + UDP-N-acetyl-alpha-D-glucosamine = UDP-N-acetyl-3-O-(1-carboxyvinyl)-alpha-D-glucosamine + phosphate</text>
        <dbReference type="Rhea" id="RHEA:18681"/>
        <dbReference type="ChEBI" id="CHEBI:43474"/>
        <dbReference type="ChEBI" id="CHEBI:57705"/>
        <dbReference type="ChEBI" id="CHEBI:58702"/>
        <dbReference type="ChEBI" id="CHEBI:68483"/>
        <dbReference type="EC" id="2.5.1.7"/>
    </reaction>
</comment>
<comment type="pathway">
    <text evidence="1">Cell wall biogenesis; peptidoglycan biosynthesis.</text>
</comment>
<comment type="subcellular location">
    <subcellularLocation>
        <location evidence="1">Cytoplasm</location>
    </subcellularLocation>
</comment>
<comment type="similarity">
    <text evidence="1">Belongs to the EPSP synthase family. MurA subfamily.</text>
</comment>
<sequence>MDRIRIVGGNRLNGTIPISGAKNAALPLMIAALLTEETLILDNVPRLADVAQLQRILGNHGVDIMSAGKRPGDHEYQGQTLHISAASVIDTTAPYELVSKMRASFWVIAPLLARMHEARVSLPGGCAIGTRPVDLLILALEKLGARIAIDGGYVIASAPAGLRGAEVAFPKVTVSGTHVALMAATLASGTTVITNAACEPEIVDVADCLNKMGARVSGAGTPRIVIEGVGRLGGARHTVLPDRIETGTYAMAVAMTGGEVLLRGARPELLQAALDVLTEAGAEITPNNEGIRVARNGAGINPVTVSTAPFPGFPTDLQAQLMALMTRARGTSHITETIFENRFMHVQELARLGARIHLDGETATIEGIETLRGAPVMATDLRASVSLVIAGLAGEGETMVNRVYHLDRGFEQLEKKLSACGASIERIRA</sequence>
<keyword id="KW-0131">Cell cycle</keyword>
<keyword id="KW-0132">Cell division</keyword>
<keyword id="KW-0133">Cell shape</keyword>
<keyword id="KW-0961">Cell wall biogenesis/degradation</keyword>
<keyword id="KW-0963">Cytoplasm</keyword>
<keyword id="KW-0573">Peptidoglycan synthesis</keyword>
<keyword id="KW-0670">Pyruvate</keyword>
<keyword id="KW-1185">Reference proteome</keyword>
<keyword id="KW-0808">Transferase</keyword>